<proteinExistence type="inferred from homology"/>
<organism>
    <name type="scientific">Dictyostelium discoideum</name>
    <name type="common">Social amoeba</name>
    <dbReference type="NCBI Taxonomy" id="44689"/>
    <lineage>
        <taxon>Eukaryota</taxon>
        <taxon>Amoebozoa</taxon>
        <taxon>Evosea</taxon>
        <taxon>Eumycetozoa</taxon>
        <taxon>Dictyostelia</taxon>
        <taxon>Dictyosteliales</taxon>
        <taxon>Dictyosteliaceae</taxon>
        <taxon>Dictyostelium</taxon>
    </lineage>
</organism>
<protein>
    <recommendedName>
        <fullName>ABC transporter A family member 8</fullName>
    </recommendedName>
    <alternativeName>
        <fullName>ABC transporter ABCA.8</fullName>
    </alternativeName>
</protein>
<reference key="1">
    <citation type="journal article" date="2002" name="Eukaryot. Cell">
        <title>Evolutionary analyses of ABC transporters of Dictyostelium discoideum.</title>
        <authorList>
            <person name="Anjard C."/>
            <person name="Loomis W.F."/>
        </authorList>
    </citation>
    <scope>NUCLEOTIDE SEQUENCE [GENOMIC DNA]</scope>
    <scope>NOMENCLATURE</scope>
    <source>
        <strain>AX4</strain>
    </source>
</reference>
<reference key="2">
    <citation type="journal article" date="2002" name="Nature">
        <title>Sequence and analysis of chromosome 2 of Dictyostelium discoideum.</title>
        <authorList>
            <person name="Gloeckner G."/>
            <person name="Eichinger L."/>
            <person name="Szafranski K."/>
            <person name="Pachebat J.A."/>
            <person name="Bankier A.T."/>
            <person name="Dear P.H."/>
            <person name="Lehmann R."/>
            <person name="Baumgart C."/>
            <person name="Parra G."/>
            <person name="Abril J.F."/>
            <person name="Guigo R."/>
            <person name="Kumpf K."/>
            <person name="Tunggal B."/>
            <person name="Cox E.C."/>
            <person name="Quail M.A."/>
            <person name="Platzer M."/>
            <person name="Rosenthal A."/>
            <person name="Noegel A.A."/>
        </authorList>
    </citation>
    <scope>NUCLEOTIDE SEQUENCE [LARGE SCALE GENOMIC DNA]</scope>
    <source>
        <strain>AX4</strain>
    </source>
</reference>
<reference key="3">
    <citation type="journal article" date="2005" name="Nature">
        <title>The genome of the social amoeba Dictyostelium discoideum.</title>
        <authorList>
            <person name="Eichinger L."/>
            <person name="Pachebat J.A."/>
            <person name="Gloeckner G."/>
            <person name="Rajandream M.A."/>
            <person name="Sucgang R."/>
            <person name="Berriman M."/>
            <person name="Song J."/>
            <person name="Olsen R."/>
            <person name="Szafranski K."/>
            <person name="Xu Q."/>
            <person name="Tunggal B."/>
            <person name="Kummerfeld S."/>
            <person name="Madera M."/>
            <person name="Konfortov B.A."/>
            <person name="Rivero F."/>
            <person name="Bankier A.T."/>
            <person name="Lehmann R."/>
            <person name="Hamlin N."/>
            <person name="Davies R."/>
            <person name="Gaudet P."/>
            <person name="Fey P."/>
            <person name="Pilcher K."/>
            <person name="Chen G."/>
            <person name="Saunders D."/>
            <person name="Sodergren E.J."/>
            <person name="Davis P."/>
            <person name="Kerhornou A."/>
            <person name="Nie X."/>
            <person name="Hall N."/>
            <person name="Anjard C."/>
            <person name="Hemphill L."/>
            <person name="Bason N."/>
            <person name="Farbrother P."/>
            <person name="Desany B."/>
            <person name="Just E."/>
            <person name="Morio T."/>
            <person name="Rost R."/>
            <person name="Churcher C.M."/>
            <person name="Cooper J."/>
            <person name="Haydock S."/>
            <person name="van Driessche N."/>
            <person name="Cronin A."/>
            <person name="Goodhead I."/>
            <person name="Muzny D.M."/>
            <person name="Mourier T."/>
            <person name="Pain A."/>
            <person name="Lu M."/>
            <person name="Harper D."/>
            <person name="Lindsay R."/>
            <person name="Hauser H."/>
            <person name="James K.D."/>
            <person name="Quiles M."/>
            <person name="Madan Babu M."/>
            <person name="Saito T."/>
            <person name="Buchrieser C."/>
            <person name="Wardroper A."/>
            <person name="Felder M."/>
            <person name="Thangavelu M."/>
            <person name="Johnson D."/>
            <person name="Knights A."/>
            <person name="Loulseged H."/>
            <person name="Mungall K.L."/>
            <person name="Oliver K."/>
            <person name="Price C."/>
            <person name="Quail M.A."/>
            <person name="Urushihara H."/>
            <person name="Hernandez J."/>
            <person name="Rabbinowitsch E."/>
            <person name="Steffen D."/>
            <person name="Sanders M."/>
            <person name="Ma J."/>
            <person name="Kohara Y."/>
            <person name="Sharp S."/>
            <person name="Simmonds M.N."/>
            <person name="Spiegler S."/>
            <person name="Tivey A."/>
            <person name="Sugano S."/>
            <person name="White B."/>
            <person name="Walker D."/>
            <person name="Woodward J.R."/>
            <person name="Winckler T."/>
            <person name="Tanaka Y."/>
            <person name="Shaulsky G."/>
            <person name="Schleicher M."/>
            <person name="Weinstock G.M."/>
            <person name="Rosenthal A."/>
            <person name="Cox E.C."/>
            <person name="Chisholm R.L."/>
            <person name="Gibbs R.A."/>
            <person name="Loomis W.F."/>
            <person name="Platzer M."/>
            <person name="Kay R.R."/>
            <person name="Williams J.G."/>
            <person name="Dear P.H."/>
            <person name="Noegel A.A."/>
            <person name="Barrell B.G."/>
            <person name="Kuspa A."/>
        </authorList>
    </citation>
    <scope>NUCLEOTIDE SEQUENCE [LARGE SCALE GENOMIC DNA]</scope>
    <source>
        <strain>AX4</strain>
    </source>
</reference>
<evidence type="ECO:0000255" key="1"/>
<evidence type="ECO:0000255" key="2">
    <source>
        <dbReference type="PROSITE-ProRule" id="PRU00434"/>
    </source>
</evidence>
<evidence type="ECO:0000305" key="3"/>
<sequence length="837" mass="93818">MSIGETIHREFIHLKLLLKKNFLVSIRSYFSTIIELLSPIVFVLIFYIIYSYGSAVDYSNVSYEQNLPNCIVSVENRCINLMFSPMNSTCTVEIMKILAKNNNMEIYNYPTDTGPLPNLENTIGFHGGIIAMDSLNSTEQFILAHPNVTLAVVDFENFPLNFTINGVKPNDSLIGFNDFYDLSFNVLLNLSTSGGFIEPVDYSIPVTTSIQKAIYDFYAINNQKQIPTINFDSTQFIEYSSVNVVSLFGGLFYYCAIMISFIFLLYKVAFEKEKNLKQGMVMMGLSRSMYWLSWVITSFTIDLIICLLLIAIGAICKLPFFLGTNFLVLLLNFFLFAISSSSMAFFMLTFIGKTKVAIGIGMAFFIVGSGLQLTFNSLGSLIFQIIYQTDSNGAAFVRVILFILPMFHFSKVLTDINDKVQSYPTSQFKISDLNDNLDGSQYGMDYLVPTTGQSLAYMFILVIVYLSLSAIIEYALSGGFSFKTVKHINVPHFDDQDVANATNRSLDPSNKSPFIIRGLSKTFNKFLRPSKSVHALKYLSLDIQEGTVLGLLGSNGAGKSTTIGILTGIHSPTSGDAIIYGHSVVKDIHSVRKITSVVPQDDILWLELTAMEHLHLFAELKGIPVRERDFQIAKVLEQVKLTKVANDQCSTFSGGMKRRLSVAIGCIGDPKIIFMDEPTTGLDPRSKRRIYTLVKEIKKDKVIILTSHDMHEIEILAQNLVILNDGIMVCNGNALQLKTKYGEGYSVQVIAKSLEVIPEIINFVTSSLPYCRFLKQSALQLNFGFPINTDPKIIVNFFKRLESITKDENNNLMRDWSISHSNMDDVFIKVSNKPKLQ</sequence>
<gene>
    <name type="primary">abcA8</name>
    <name type="ORF">DDB_G0271138</name>
</gene>
<accession>Q55BC0</accession>
<accession>Q8T6I9</accession>
<keyword id="KW-0067">ATP-binding</keyword>
<keyword id="KW-0472">Membrane</keyword>
<keyword id="KW-0547">Nucleotide-binding</keyword>
<keyword id="KW-1185">Reference proteome</keyword>
<keyword id="KW-0812">Transmembrane</keyword>
<keyword id="KW-1133">Transmembrane helix</keyword>
<keyword id="KW-0813">Transport</keyword>
<name>ABCA8_DICDI</name>
<feature type="chain" id="PRO_0000363840" description="ABC transporter A family member 8">
    <location>
        <begin position="1"/>
        <end position="837"/>
    </location>
</feature>
<feature type="transmembrane region" description="Helical" evidence="1">
    <location>
        <begin position="29"/>
        <end position="49"/>
    </location>
</feature>
<feature type="transmembrane region" description="Helical" evidence="1">
    <location>
        <begin position="244"/>
        <end position="264"/>
    </location>
</feature>
<feature type="transmembrane region" description="Helical" evidence="1">
    <location>
        <begin position="303"/>
        <end position="323"/>
    </location>
</feature>
<feature type="transmembrane region" description="Helical" evidence="1">
    <location>
        <begin position="326"/>
        <end position="346"/>
    </location>
</feature>
<feature type="transmembrane region" description="Helical" evidence="1">
    <location>
        <begin position="356"/>
        <end position="376"/>
    </location>
</feature>
<feature type="transmembrane region" description="Helical" evidence="1">
    <location>
        <begin position="393"/>
        <end position="413"/>
    </location>
</feature>
<feature type="transmembrane region" description="Helical" evidence="1">
    <location>
        <begin position="455"/>
        <end position="475"/>
    </location>
</feature>
<feature type="domain" description="ABC transporter" evidence="2">
    <location>
        <begin position="516"/>
        <end position="750"/>
    </location>
</feature>
<feature type="binding site" evidence="2">
    <location>
        <begin position="553"/>
        <end position="560"/>
    </location>
    <ligand>
        <name>ATP</name>
        <dbReference type="ChEBI" id="CHEBI:30616"/>
    </ligand>
</feature>
<dbReference type="EMBL" id="AF465310">
    <property type="protein sequence ID" value="AAL85301.1"/>
    <property type="status" value="ALT_SEQ"/>
    <property type="molecule type" value="Genomic_DNA"/>
</dbReference>
<dbReference type="EMBL" id="AAFI02000006">
    <property type="protein sequence ID" value="EAL71699.1"/>
    <property type="molecule type" value="Genomic_DNA"/>
</dbReference>
<dbReference type="RefSeq" id="XP_645692.1">
    <property type="nucleotide sequence ID" value="XM_640600.1"/>
</dbReference>
<dbReference type="SMR" id="Q55BC0"/>
<dbReference type="FunCoup" id="Q55BC0">
    <property type="interactions" value="147"/>
</dbReference>
<dbReference type="STRING" id="44689.Q55BC0"/>
<dbReference type="PaxDb" id="44689-DDB0216250"/>
<dbReference type="EnsemblProtists" id="EAL71699">
    <property type="protein sequence ID" value="EAL71699"/>
    <property type="gene ID" value="DDB_G0271138"/>
</dbReference>
<dbReference type="GeneID" id="8617885"/>
<dbReference type="KEGG" id="ddi:DDB_G0271138"/>
<dbReference type="dictyBase" id="DDB_G0271138">
    <property type="gene designation" value="abcA8"/>
</dbReference>
<dbReference type="VEuPathDB" id="AmoebaDB:DDB_G0271138"/>
<dbReference type="eggNOG" id="KOG0059">
    <property type="taxonomic scope" value="Eukaryota"/>
</dbReference>
<dbReference type="HOGENOM" id="CLU_000604_19_5_1"/>
<dbReference type="InParanoid" id="Q55BC0"/>
<dbReference type="OMA" id="TSFIEMM"/>
<dbReference type="PhylomeDB" id="Q55BC0"/>
<dbReference type="PRO" id="PR:Q55BC0"/>
<dbReference type="Proteomes" id="UP000002195">
    <property type="component" value="Chromosome 2"/>
</dbReference>
<dbReference type="GO" id="GO:0043231">
    <property type="term" value="C:intracellular membrane-bounded organelle"/>
    <property type="evidence" value="ECO:0000318"/>
    <property type="project" value="GO_Central"/>
</dbReference>
<dbReference type="GO" id="GO:0016020">
    <property type="term" value="C:membrane"/>
    <property type="evidence" value="ECO:0007669"/>
    <property type="project" value="UniProtKB-SubCell"/>
</dbReference>
<dbReference type="GO" id="GO:0140359">
    <property type="term" value="F:ABC-type transporter activity"/>
    <property type="evidence" value="ECO:0007669"/>
    <property type="project" value="InterPro"/>
</dbReference>
<dbReference type="GO" id="GO:0005524">
    <property type="term" value="F:ATP binding"/>
    <property type="evidence" value="ECO:0007669"/>
    <property type="project" value="UniProtKB-KW"/>
</dbReference>
<dbReference type="GO" id="GO:0016887">
    <property type="term" value="F:ATP hydrolysis activity"/>
    <property type="evidence" value="ECO:0007669"/>
    <property type="project" value="InterPro"/>
</dbReference>
<dbReference type="GO" id="GO:0042626">
    <property type="term" value="F:ATPase-coupled transmembrane transporter activity"/>
    <property type="evidence" value="ECO:0000318"/>
    <property type="project" value="GO_Central"/>
</dbReference>
<dbReference type="GO" id="GO:0005319">
    <property type="term" value="F:lipid transporter activity"/>
    <property type="evidence" value="ECO:0000318"/>
    <property type="project" value="GO_Central"/>
</dbReference>
<dbReference type="GO" id="GO:0006869">
    <property type="term" value="P:lipid transport"/>
    <property type="evidence" value="ECO:0000318"/>
    <property type="project" value="GO_Central"/>
</dbReference>
<dbReference type="CDD" id="cd03263">
    <property type="entry name" value="ABC_subfamily_A"/>
    <property type="match status" value="1"/>
</dbReference>
<dbReference type="FunFam" id="3.40.50.300:FF:000665">
    <property type="entry name" value="ABC transporter A family member 2"/>
    <property type="match status" value="1"/>
</dbReference>
<dbReference type="Gene3D" id="3.40.50.300">
    <property type="entry name" value="P-loop containing nucleotide triphosphate hydrolases"/>
    <property type="match status" value="1"/>
</dbReference>
<dbReference type="InterPro" id="IPR003593">
    <property type="entry name" value="AAA+_ATPase"/>
</dbReference>
<dbReference type="InterPro" id="IPR013525">
    <property type="entry name" value="ABC2_TM"/>
</dbReference>
<dbReference type="InterPro" id="IPR003439">
    <property type="entry name" value="ABC_transporter-like_ATP-bd"/>
</dbReference>
<dbReference type="InterPro" id="IPR026082">
    <property type="entry name" value="ABCA"/>
</dbReference>
<dbReference type="InterPro" id="IPR027417">
    <property type="entry name" value="P-loop_NTPase"/>
</dbReference>
<dbReference type="PANTHER" id="PTHR19229:SF205">
    <property type="entry name" value="ABC TRANSPORTER A FAMILY MEMBER 1-RELATED"/>
    <property type="match status" value="1"/>
</dbReference>
<dbReference type="PANTHER" id="PTHR19229">
    <property type="entry name" value="ATP-BINDING CASSETTE TRANSPORTER SUBFAMILY A ABCA"/>
    <property type="match status" value="1"/>
</dbReference>
<dbReference type="Pfam" id="PF12698">
    <property type="entry name" value="ABC2_membrane_3"/>
    <property type="match status" value="1"/>
</dbReference>
<dbReference type="Pfam" id="PF00005">
    <property type="entry name" value="ABC_tran"/>
    <property type="match status" value="1"/>
</dbReference>
<dbReference type="SMART" id="SM00382">
    <property type="entry name" value="AAA"/>
    <property type="match status" value="1"/>
</dbReference>
<dbReference type="SUPFAM" id="SSF52540">
    <property type="entry name" value="P-loop containing nucleoside triphosphate hydrolases"/>
    <property type="match status" value="1"/>
</dbReference>
<dbReference type="PROSITE" id="PS50893">
    <property type="entry name" value="ABC_TRANSPORTER_2"/>
    <property type="match status" value="1"/>
</dbReference>
<comment type="subcellular location">
    <subcellularLocation>
        <location evidence="3">Membrane</location>
        <topology evidence="3">Multi-pass membrane protein</topology>
    </subcellularLocation>
</comment>
<comment type="similarity">
    <text evidence="3">Belongs to the ABC transporter superfamily. ABCA family.</text>
</comment>
<comment type="sequence caution" evidence="3">
    <conflict type="erroneous gene model prediction">
        <sequence resource="EMBL-CDS" id="AAL85301"/>
    </conflict>
</comment>